<comment type="function">
    <text evidence="1">NDH shuttles electrons from NAD(P)H:plastoquinone, via FMN and iron-sulfur (Fe-S) centers, to quinones in the photosynthetic chain and possibly in a chloroplast respiratory chain. The immediate electron acceptor for the enzyme in this species is believed to be plastoquinone. Couples the redox reaction to proton translocation, and thus conserves the redox energy in a proton gradient.</text>
</comment>
<comment type="catalytic activity">
    <reaction evidence="1">
        <text>a plastoquinone + NADH + (n+1) H(+)(in) = a plastoquinol + NAD(+) + n H(+)(out)</text>
        <dbReference type="Rhea" id="RHEA:42608"/>
        <dbReference type="Rhea" id="RHEA-COMP:9561"/>
        <dbReference type="Rhea" id="RHEA-COMP:9562"/>
        <dbReference type="ChEBI" id="CHEBI:15378"/>
        <dbReference type="ChEBI" id="CHEBI:17757"/>
        <dbReference type="ChEBI" id="CHEBI:57540"/>
        <dbReference type="ChEBI" id="CHEBI:57945"/>
        <dbReference type="ChEBI" id="CHEBI:62192"/>
    </reaction>
</comment>
<comment type="catalytic activity">
    <reaction evidence="1">
        <text>a plastoquinone + NADPH + (n+1) H(+)(in) = a plastoquinol + NADP(+) + n H(+)(out)</text>
        <dbReference type="Rhea" id="RHEA:42612"/>
        <dbReference type="Rhea" id="RHEA-COMP:9561"/>
        <dbReference type="Rhea" id="RHEA-COMP:9562"/>
        <dbReference type="ChEBI" id="CHEBI:15378"/>
        <dbReference type="ChEBI" id="CHEBI:17757"/>
        <dbReference type="ChEBI" id="CHEBI:57783"/>
        <dbReference type="ChEBI" id="CHEBI:58349"/>
        <dbReference type="ChEBI" id="CHEBI:62192"/>
    </reaction>
</comment>
<comment type="subunit">
    <text evidence="1">NDH is composed of at least 16 different subunits, 5 of which are encoded in the nucleus.</text>
</comment>
<comment type="subcellular location">
    <subcellularLocation>
        <location evidence="1">Plastid</location>
        <location evidence="1">Chloroplast thylakoid membrane</location>
        <topology evidence="1">Multi-pass membrane protein</topology>
    </subcellularLocation>
</comment>
<comment type="similarity">
    <text evidence="1">Belongs to the complex I subunit 2 family.</text>
</comment>
<comment type="sequence caution" evidence="2">
    <conflict type="erroneous initiation">
        <sequence resource="EMBL-CDS" id="AAN32100"/>
    </conflict>
</comment>
<protein>
    <recommendedName>
        <fullName evidence="1">NAD(P)H-quinone oxidoreductase subunit 2, chloroplastic</fullName>
        <ecNumber evidence="1">7.1.1.-</ecNumber>
    </recommendedName>
    <alternativeName>
        <fullName evidence="1">NAD(P)H dehydrogenase, subunit 2</fullName>
    </alternativeName>
    <alternativeName>
        <fullName evidence="1">NADH-plastoquinone oxidoreductase subunit 2</fullName>
    </alternativeName>
</protein>
<geneLocation type="chloroplast"/>
<proteinExistence type="inferred from homology"/>
<dbReference type="EC" id="7.1.1.-" evidence="1"/>
<dbReference type="EMBL" id="AY147498">
    <property type="protein sequence ID" value="AAN32100.1"/>
    <property type="status" value="ALT_INIT"/>
    <property type="molecule type" value="Genomic_DNA"/>
</dbReference>
<dbReference type="SMR" id="Q67IA3"/>
<dbReference type="GO" id="GO:0009535">
    <property type="term" value="C:chloroplast thylakoid membrane"/>
    <property type="evidence" value="ECO:0007669"/>
    <property type="project" value="UniProtKB-SubCell"/>
</dbReference>
<dbReference type="GO" id="GO:0008137">
    <property type="term" value="F:NADH dehydrogenase (ubiquinone) activity"/>
    <property type="evidence" value="ECO:0007669"/>
    <property type="project" value="InterPro"/>
</dbReference>
<dbReference type="GO" id="GO:0048038">
    <property type="term" value="F:quinone binding"/>
    <property type="evidence" value="ECO:0007669"/>
    <property type="project" value="UniProtKB-KW"/>
</dbReference>
<dbReference type="GO" id="GO:0042773">
    <property type="term" value="P:ATP synthesis coupled electron transport"/>
    <property type="evidence" value="ECO:0007669"/>
    <property type="project" value="InterPro"/>
</dbReference>
<dbReference type="GO" id="GO:0019684">
    <property type="term" value="P:photosynthesis, light reaction"/>
    <property type="evidence" value="ECO:0007669"/>
    <property type="project" value="UniProtKB-UniRule"/>
</dbReference>
<dbReference type="HAMAP" id="MF_00445">
    <property type="entry name" value="NDH1_NuoN_1"/>
    <property type="match status" value="1"/>
</dbReference>
<dbReference type="InterPro" id="IPR010096">
    <property type="entry name" value="NADH-Q_OxRdtase_suN/2"/>
</dbReference>
<dbReference type="InterPro" id="IPR001750">
    <property type="entry name" value="ND/Mrp_TM"/>
</dbReference>
<dbReference type="InterPro" id="IPR045693">
    <property type="entry name" value="Ndh2_N"/>
</dbReference>
<dbReference type="NCBIfam" id="TIGR01770">
    <property type="entry name" value="NDH_I_N"/>
    <property type="match status" value="1"/>
</dbReference>
<dbReference type="NCBIfam" id="NF002701">
    <property type="entry name" value="PRK02504.1"/>
    <property type="match status" value="1"/>
</dbReference>
<dbReference type="PANTHER" id="PTHR22773">
    <property type="entry name" value="NADH DEHYDROGENASE"/>
    <property type="match status" value="1"/>
</dbReference>
<dbReference type="Pfam" id="PF19530">
    <property type="entry name" value="Ndh2_N"/>
    <property type="match status" value="1"/>
</dbReference>
<dbReference type="Pfam" id="PF00361">
    <property type="entry name" value="Proton_antipo_M"/>
    <property type="match status" value="1"/>
</dbReference>
<dbReference type="PRINTS" id="PR01434">
    <property type="entry name" value="NADHDHGNASE5"/>
</dbReference>
<accession>Q67IA3</accession>
<name>NU2C_YUCGL</name>
<keyword id="KW-0150">Chloroplast</keyword>
<keyword id="KW-0472">Membrane</keyword>
<keyword id="KW-0520">NAD</keyword>
<keyword id="KW-0521">NADP</keyword>
<keyword id="KW-0934">Plastid</keyword>
<keyword id="KW-0618">Plastoquinone</keyword>
<keyword id="KW-0874">Quinone</keyword>
<keyword id="KW-0793">Thylakoid</keyword>
<keyword id="KW-1278">Translocase</keyword>
<keyword id="KW-0812">Transmembrane</keyword>
<keyword id="KW-1133">Transmembrane helix</keyword>
<keyword id="KW-0813">Transport</keyword>
<reference key="1">
    <citation type="submission" date="2002-09" db="EMBL/GenBank/DDBJ databases">
        <title>Phylogenetic relationships among the major lineages of Asparagales based on a large chloroplast data set.</title>
        <authorList>
            <person name="McPherson M.A."/>
            <person name="Rai H.S."/>
            <person name="Wong W.A."/>
            <person name="Graham S.W."/>
        </authorList>
    </citation>
    <scope>NUCLEOTIDE SEQUENCE [GENOMIC DNA]</scope>
</reference>
<feature type="chain" id="PRO_0000117682" description="NAD(P)H-quinone oxidoreductase subunit 2, chloroplastic">
    <location>
        <begin position="1"/>
        <end position="510"/>
    </location>
</feature>
<feature type="transmembrane region" description="Helical" evidence="1">
    <location>
        <begin position="24"/>
        <end position="44"/>
    </location>
</feature>
<feature type="transmembrane region" description="Helical" evidence="1">
    <location>
        <begin position="59"/>
        <end position="79"/>
    </location>
</feature>
<feature type="transmembrane region" description="Helical" evidence="1">
    <location>
        <begin position="99"/>
        <end position="119"/>
    </location>
</feature>
<feature type="transmembrane region" description="Helical" evidence="1">
    <location>
        <begin position="124"/>
        <end position="144"/>
    </location>
</feature>
<feature type="transmembrane region" description="Helical" evidence="1">
    <location>
        <begin position="149"/>
        <end position="169"/>
    </location>
</feature>
<feature type="transmembrane region" description="Helical" evidence="1">
    <location>
        <begin position="183"/>
        <end position="203"/>
    </location>
</feature>
<feature type="transmembrane region" description="Helical" evidence="1">
    <location>
        <begin position="229"/>
        <end position="249"/>
    </location>
</feature>
<feature type="transmembrane region" description="Helical" evidence="1">
    <location>
        <begin position="295"/>
        <end position="315"/>
    </location>
</feature>
<feature type="transmembrane region" description="Helical" evidence="1">
    <location>
        <begin position="323"/>
        <end position="343"/>
    </location>
</feature>
<feature type="transmembrane region" description="Helical" evidence="1">
    <location>
        <begin position="347"/>
        <end position="367"/>
    </location>
</feature>
<feature type="transmembrane region" description="Helical" evidence="1">
    <location>
        <begin position="395"/>
        <end position="415"/>
    </location>
</feature>
<feature type="transmembrane region" description="Helical" evidence="1">
    <location>
        <begin position="418"/>
        <end position="438"/>
    </location>
</feature>
<sequence length="510" mass="56753">MIWHVQNENFILDSTRIFMKAFHLLLFHGSFIFPECILIFGLILLLMIDSTSDQKDRPWFYFISSTSLVMSITALLFRWKEEPIISFSGNFQTNNFNEIFQFLILLCSTLCIPLSVEYIECTEMAITEFLLFVLTATLGGMFLCGANDLITIFVAPECFSLCSYLLSGYTKRDVRSNEATTKYLLMGGASSSILVHGFSWLYGSSGGEIELQEIVNGLINTQMYNSPGISIALISITVGIGFKLSPAPFHQWTPDVYEGSPTPVVAFLSVTSKVAASASATRIFDIPFYFSSNEWHLLLEILAILSMILGNLIAITQTSMKRMLAYSSIGQIGYVIIGIIVGDSNDGYASMITYMLFYISMNLGTFARIVSFGLRTGTDNIRDYAGLYTKDPFLALSSALCLLSLGGLPPLAGFFGKLHLFWCGWQAGLYFLVSIGLLTSVVSIYYYLKIIKLLMTGRNQEITPHVRNYRRSPLRSNNSIEWSMTVCVIASTIPGISMNPILAIAQDTLF</sequence>
<organism>
    <name type="scientific">Yucca glauca</name>
    <name type="common">Soapweed yucca</name>
    <name type="synonym">Yucca angustifolia</name>
    <dbReference type="NCBI Taxonomy" id="207936"/>
    <lineage>
        <taxon>Eukaryota</taxon>
        <taxon>Viridiplantae</taxon>
        <taxon>Streptophyta</taxon>
        <taxon>Embryophyta</taxon>
        <taxon>Tracheophyta</taxon>
        <taxon>Spermatophyta</taxon>
        <taxon>Magnoliopsida</taxon>
        <taxon>Liliopsida</taxon>
        <taxon>Asparagales</taxon>
        <taxon>Asparagaceae</taxon>
        <taxon>Agavoideae</taxon>
        <taxon>Yucca</taxon>
    </lineage>
</organism>
<gene>
    <name evidence="1" type="primary">ndhB</name>
</gene>
<evidence type="ECO:0000255" key="1">
    <source>
        <dbReference type="HAMAP-Rule" id="MF_00445"/>
    </source>
</evidence>
<evidence type="ECO:0000305" key="2"/>